<name>RS8_LEGPC</name>
<proteinExistence type="inferred from homology"/>
<reference key="1">
    <citation type="submission" date="2006-11" db="EMBL/GenBank/DDBJ databases">
        <title>Identification and characterization of a new conjugation/ type IVA secretion system (trb/tra) of L. pneumophila Corby localized on a mobile genomic island.</title>
        <authorList>
            <person name="Gloeckner G."/>
            <person name="Albert-Weissenberger C."/>
            <person name="Weinmann E."/>
            <person name="Jacobi S."/>
            <person name="Schunder E."/>
            <person name="Steinert M."/>
            <person name="Buchrieser C."/>
            <person name="Hacker J."/>
            <person name="Heuner K."/>
        </authorList>
    </citation>
    <scope>NUCLEOTIDE SEQUENCE [LARGE SCALE GENOMIC DNA]</scope>
    <source>
        <strain>Corby</strain>
    </source>
</reference>
<dbReference type="EMBL" id="CP000675">
    <property type="protein sequence ID" value="ABQ56900.1"/>
    <property type="molecule type" value="Genomic_DNA"/>
</dbReference>
<dbReference type="SMR" id="A5IHQ0"/>
<dbReference type="KEGG" id="lpc:LPC_2999"/>
<dbReference type="HOGENOM" id="CLU_098428_0_0_6"/>
<dbReference type="GO" id="GO:1990904">
    <property type="term" value="C:ribonucleoprotein complex"/>
    <property type="evidence" value="ECO:0007669"/>
    <property type="project" value="UniProtKB-KW"/>
</dbReference>
<dbReference type="GO" id="GO:0005840">
    <property type="term" value="C:ribosome"/>
    <property type="evidence" value="ECO:0007669"/>
    <property type="project" value="UniProtKB-KW"/>
</dbReference>
<dbReference type="GO" id="GO:0019843">
    <property type="term" value="F:rRNA binding"/>
    <property type="evidence" value="ECO:0007669"/>
    <property type="project" value="UniProtKB-UniRule"/>
</dbReference>
<dbReference type="GO" id="GO:0003735">
    <property type="term" value="F:structural constituent of ribosome"/>
    <property type="evidence" value="ECO:0007669"/>
    <property type="project" value="InterPro"/>
</dbReference>
<dbReference type="GO" id="GO:0006412">
    <property type="term" value="P:translation"/>
    <property type="evidence" value="ECO:0007669"/>
    <property type="project" value="UniProtKB-UniRule"/>
</dbReference>
<dbReference type="FunFam" id="3.30.1370.30:FF:000002">
    <property type="entry name" value="30S ribosomal protein S8"/>
    <property type="match status" value="1"/>
</dbReference>
<dbReference type="FunFam" id="3.30.1490.10:FF:000001">
    <property type="entry name" value="30S ribosomal protein S8"/>
    <property type="match status" value="1"/>
</dbReference>
<dbReference type="Gene3D" id="3.30.1370.30">
    <property type="match status" value="1"/>
</dbReference>
<dbReference type="Gene3D" id="3.30.1490.10">
    <property type="match status" value="1"/>
</dbReference>
<dbReference type="HAMAP" id="MF_01302_B">
    <property type="entry name" value="Ribosomal_uS8_B"/>
    <property type="match status" value="1"/>
</dbReference>
<dbReference type="InterPro" id="IPR000630">
    <property type="entry name" value="Ribosomal_uS8"/>
</dbReference>
<dbReference type="InterPro" id="IPR047863">
    <property type="entry name" value="Ribosomal_uS8_CS"/>
</dbReference>
<dbReference type="InterPro" id="IPR035987">
    <property type="entry name" value="Ribosomal_uS8_sf"/>
</dbReference>
<dbReference type="NCBIfam" id="NF001109">
    <property type="entry name" value="PRK00136.1"/>
    <property type="match status" value="1"/>
</dbReference>
<dbReference type="PANTHER" id="PTHR11758">
    <property type="entry name" value="40S RIBOSOMAL PROTEIN S15A"/>
    <property type="match status" value="1"/>
</dbReference>
<dbReference type="Pfam" id="PF00410">
    <property type="entry name" value="Ribosomal_S8"/>
    <property type="match status" value="1"/>
</dbReference>
<dbReference type="SUPFAM" id="SSF56047">
    <property type="entry name" value="Ribosomal protein S8"/>
    <property type="match status" value="1"/>
</dbReference>
<dbReference type="PROSITE" id="PS00053">
    <property type="entry name" value="RIBOSOMAL_S8"/>
    <property type="match status" value="1"/>
</dbReference>
<keyword id="KW-0687">Ribonucleoprotein</keyword>
<keyword id="KW-0689">Ribosomal protein</keyword>
<keyword id="KW-0694">RNA-binding</keyword>
<keyword id="KW-0699">rRNA-binding</keyword>
<comment type="function">
    <text evidence="1">One of the primary rRNA binding proteins, it binds directly to 16S rRNA central domain where it helps coordinate assembly of the platform of the 30S subunit.</text>
</comment>
<comment type="subunit">
    <text evidence="1">Part of the 30S ribosomal subunit. Contacts proteins S5 and S12.</text>
</comment>
<comment type="similarity">
    <text evidence="1">Belongs to the universal ribosomal protein uS8 family.</text>
</comment>
<evidence type="ECO:0000255" key="1">
    <source>
        <dbReference type="HAMAP-Rule" id="MF_01302"/>
    </source>
</evidence>
<evidence type="ECO:0000305" key="2"/>
<sequence>MHDPIADMLTRIRNGQQAKHQQVTLVSSKLKEEIARVLKEEGYIQDFFTETLPNGLKSITLKLKYYHGRPVIEFIKRISRPGLRVYKSYKDLHSIPGFGVAILSTSKGIMTHVSAKVKGVGGEVICEVA</sequence>
<gene>
    <name evidence="1" type="primary">rpsH</name>
    <name type="ordered locus">LPC_2999</name>
</gene>
<accession>A5IHQ0</accession>
<feature type="chain" id="PRO_0000305749" description="Small ribosomal subunit protein uS8">
    <location>
        <begin position="1"/>
        <end position="129"/>
    </location>
</feature>
<protein>
    <recommendedName>
        <fullName evidence="1">Small ribosomal subunit protein uS8</fullName>
    </recommendedName>
    <alternativeName>
        <fullName evidence="2">30S ribosomal protein S8</fullName>
    </alternativeName>
</protein>
<organism>
    <name type="scientific">Legionella pneumophila (strain Corby)</name>
    <dbReference type="NCBI Taxonomy" id="400673"/>
    <lineage>
        <taxon>Bacteria</taxon>
        <taxon>Pseudomonadati</taxon>
        <taxon>Pseudomonadota</taxon>
        <taxon>Gammaproteobacteria</taxon>
        <taxon>Legionellales</taxon>
        <taxon>Legionellaceae</taxon>
        <taxon>Legionella</taxon>
    </lineage>
</organism>